<organism>
    <name type="scientific">Mesorhizobium japonicum (strain LMG 29417 / CECT 9101 / MAFF 303099)</name>
    <name type="common">Mesorhizobium loti (strain MAFF 303099)</name>
    <dbReference type="NCBI Taxonomy" id="266835"/>
    <lineage>
        <taxon>Bacteria</taxon>
        <taxon>Pseudomonadati</taxon>
        <taxon>Pseudomonadota</taxon>
        <taxon>Alphaproteobacteria</taxon>
        <taxon>Hyphomicrobiales</taxon>
        <taxon>Phyllobacteriaceae</taxon>
        <taxon>Mesorhizobium</taxon>
    </lineage>
</organism>
<evidence type="ECO:0000255" key="1">
    <source>
        <dbReference type="HAMAP-Rule" id="MF_01357"/>
    </source>
</evidence>
<feature type="chain" id="PRO_0000358182" description="NADH-quinone oxidoreductase subunit C">
    <location>
        <begin position="1"/>
        <end position="201"/>
    </location>
</feature>
<reference key="1">
    <citation type="journal article" date="2000" name="DNA Res.">
        <title>Complete genome structure of the nitrogen-fixing symbiotic bacterium Mesorhizobium loti.</title>
        <authorList>
            <person name="Kaneko T."/>
            <person name="Nakamura Y."/>
            <person name="Sato S."/>
            <person name="Asamizu E."/>
            <person name="Kato T."/>
            <person name="Sasamoto S."/>
            <person name="Watanabe A."/>
            <person name="Idesawa K."/>
            <person name="Ishikawa A."/>
            <person name="Kawashima K."/>
            <person name="Kimura T."/>
            <person name="Kishida Y."/>
            <person name="Kiyokawa C."/>
            <person name="Kohara M."/>
            <person name="Matsumoto M."/>
            <person name="Matsuno A."/>
            <person name="Mochizuki Y."/>
            <person name="Nakayama S."/>
            <person name="Nakazaki N."/>
            <person name="Shimpo S."/>
            <person name="Sugimoto M."/>
            <person name="Takeuchi C."/>
            <person name="Yamada M."/>
            <person name="Tabata S."/>
        </authorList>
    </citation>
    <scope>NUCLEOTIDE SEQUENCE [LARGE SCALE GENOMIC DNA]</scope>
    <source>
        <strain>LMG 29417 / CECT 9101 / MAFF 303099</strain>
    </source>
</reference>
<proteinExistence type="inferred from homology"/>
<gene>
    <name evidence="1" type="primary">nuoC</name>
    <name type="ordered locus">mll1369</name>
</gene>
<name>NUOC_RHILO</name>
<keyword id="KW-0997">Cell inner membrane</keyword>
<keyword id="KW-1003">Cell membrane</keyword>
<keyword id="KW-0472">Membrane</keyword>
<keyword id="KW-0520">NAD</keyword>
<keyword id="KW-0874">Quinone</keyword>
<keyword id="KW-1278">Translocase</keyword>
<keyword id="KW-0813">Transport</keyword>
<keyword id="KW-0830">Ubiquinone</keyword>
<sequence length="201" mass="23247">MAASLSELSTYLGERLIGRVNDADIAYGELTMHVEPRNLIEVVTFLRDDQRCQFISIIDVCGADYPSRPKRFDVVYHLLSPKQNVRIRLKVQADEETMVPSITGVFPGADWFERETYDLYGVLFSGHPDLRRLLTDYGFEGHPLRKDFPLTGFVEVRYDDEAKRVIYEPVELKQEFRNFDFLSPWEGTDYVLPGDEKAKTN</sequence>
<dbReference type="EC" id="7.1.1.-" evidence="1"/>
<dbReference type="EMBL" id="BA000012">
    <property type="protein sequence ID" value="BAB48757.1"/>
    <property type="molecule type" value="Genomic_DNA"/>
</dbReference>
<dbReference type="RefSeq" id="WP_010910110.1">
    <property type="nucleotide sequence ID" value="NC_002678.2"/>
</dbReference>
<dbReference type="SMR" id="Q98KQ7"/>
<dbReference type="KEGG" id="mlo:mll1369"/>
<dbReference type="PATRIC" id="fig|266835.9.peg.1102"/>
<dbReference type="eggNOG" id="COG0852">
    <property type="taxonomic scope" value="Bacteria"/>
</dbReference>
<dbReference type="HOGENOM" id="CLU_042628_2_1_5"/>
<dbReference type="Proteomes" id="UP000000552">
    <property type="component" value="Chromosome"/>
</dbReference>
<dbReference type="GO" id="GO:0005886">
    <property type="term" value="C:plasma membrane"/>
    <property type="evidence" value="ECO:0007669"/>
    <property type="project" value="UniProtKB-SubCell"/>
</dbReference>
<dbReference type="GO" id="GO:0008137">
    <property type="term" value="F:NADH dehydrogenase (ubiquinone) activity"/>
    <property type="evidence" value="ECO:0007669"/>
    <property type="project" value="InterPro"/>
</dbReference>
<dbReference type="GO" id="GO:0050136">
    <property type="term" value="F:NADH:ubiquinone reductase (non-electrogenic) activity"/>
    <property type="evidence" value="ECO:0007669"/>
    <property type="project" value="UniProtKB-UniRule"/>
</dbReference>
<dbReference type="GO" id="GO:0048038">
    <property type="term" value="F:quinone binding"/>
    <property type="evidence" value="ECO:0007669"/>
    <property type="project" value="UniProtKB-KW"/>
</dbReference>
<dbReference type="Gene3D" id="3.30.460.80">
    <property type="entry name" value="NADH:ubiquinone oxidoreductase, 30kDa subunit"/>
    <property type="match status" value="1"/>
</dbReference>
<dbReference type="HAMAP" id="MF_01357">
    <property type="entry name" value="NDH1_NuoC"/>
    <property type="match status" value="1"/>
</dbReference>
<dbReference type="InterPro" id="IPR010218">
    <property type="entry name" value="NADH_DH_suC"/>
</dbReference>
<dbReference type="InterPro" id="IPR037232">
    <property type="entry name" value="NADH_quin_OxRdtase_su_C/D-like"/>
</dbReference>
<dbReference type="InterPro" id="IPR001268">
    <property type="entry name" value="NADH_UbQ_OxRdtase_30kDa_su"/>
</dbReference>
<dbReference type="InterPro" id="IPR020396">
    <property type="entry name" value="NADH_UbQ_OxRdtase_CS"/>
</dbReference>
<dbReference type="NCBIfam" id="TIGR01961">
    <property type="entry name" value="NuoC_fam"/>
    <property type="match status" value="1"/>
</dbReference>
<dbReference type="NCBIfam" id="NF004730">
    <property type="entry name" value="PRK06074.1-1"/>
    <property type="match status" value="1"/>
</dbReference>
<dbReference type="NCBIfam" id="NF004733">
    <property type="entry name" value="PRK06074.1-5"/>
    <property type="match status" value="1"/>
</dbReference>
<dbReference type="PANTHER" id="PTHR10884:SF14">
    <property type="entry name" value="NADH DEHYDROGENASE [UBIQUINONE] IRON-SULFUR PROTEIN 3, MITOCHONDRIAL"/>
    <property type="match status" value="1"/>
</dbReference>
<dbReference type="PANTHER" id="PTHR10884">
    <property type="entry name" value="NADH DEHYDROGENASE UBIQUINONE IRON-SULFUR PROTEIN 3"/>
    <property type="match status" value="1"/>
</dbReference>
<dbReference type="Pfam" id="PF00329">
    <property type="entry name" value="Complex1_30kDa"/>
    <property type="match status" value="1"/>
</dbReference>
<dbReference type="SUPFAM" id="SSF143243">
    <property type="entry name" value="Nqo5-like"/>
    <property type="match status" value="1"/>
</dbReference>
<dbReference type="PROSITE" id="PS00542">
    <property type="entry name" value="COMPLEX1_30K"/>
    <property type="match status" value="1"/>
</dbReference>
<comment type="function">
    <text evidence="1">NDH-1 shuttles electrons from NADH, via FMN and iron-sulfur (Fe-S) centers, to quinones in the respiratory chain. The immediate electron acceptor for the enzyme in this species is believed to be ubiquinone. Couples the redox reaction to proton translocation (for every two electrons transferred, four hydrogen ions are translocated across the cytoplasmic membrane), and thus conserves the redox energy in a proton gradient.</text>
</comment>
<comment type="catalytic activity">
    <reaction evidence="1">
        <text>a quinone + NADH + 5 H(+)(in) = a quinol + NAD(+) + 4 H(+)(out)</text>
        <dbReference type="Rhea" id="RHEA:57888"/>
        <dbReference type="ChEBI" id="CHEBI:15378"/>
        <dbReference type="ChEBI" id="CHEBI:24646"/>
        <dbReference type="ChEBI" id="CHEBI:57540"/>
        <dbReference type="ChEBI" id="CHEBI:57945"/>
        <dbReference type="ChEBI" id="CHEBI:132124"/>
    </reaction>
</comment>
<comment type="subunit">
    <text evidence="1">NDH-1 is composed of 14 different subunits. Subunits NuoB, C, D, E, F, and G constitute the peripheral sector of the complex.</text>
</comment>
<comment type="subcellular location">
    <subcellularLocation>
        <location evidence="1">Cell inner membrane</location>
        <topology evidence="1">Peripheral membrane protein</topology>
        <orientation evidence="1">Cytoplasmic side</orientation>
    </subcellularLocation>
</comment>
<comment type="similarity">
    <text evidence="1">Belongs to the complex I 30 kDa subunit family.</text>
</comment>
<protein>
    <recommendedName>
        <fullName evidence="1">NADH-quinone oxidoreductase subunit C</fullName>
        <ecNumber evidence="1">7.1.1.-</ecNumber>
    </recommendedName>
    <alternativeName>
        <fullName evidence="1">NADH dehydrogenase I subunit C</fullName>
    </alternativeName>
    <alternativeName>
        <fullName evidence="1">NDH-1 subunit C</fullName>
    </alternativeName>
</protein>
<accession>Q98KQ7</accession>